<name>GPR37_RAT</name>
<keyword id="KW-1003">Cell membrane</keyword>
<keyword id="KW-0966">Cell projection</keyword>
<keyword id="KW-1015">Disulfide bond</keyword>
<keyword id="KW-0256">Endoplasmic reticulum</keyword>
<keyword id="KW-0297">G-protein coupled receptor</keyword>
<keyword id="KW-0325">Glycoprotein</keyword>
<keyword id="KW-0472">Membrane</keyword>
<keyword id="KW-0675">Receptor</keyword>
<keyword id="KW-1185">Reference proteome</keyword>
<keyword id="KW-0732">Signal</keyword>
<keyword id="KW-0770">Synapse</keyword>
<keyword id="KW-0807">Transducer</keyword>
<keyword id="KW-0812">Transmembrane</keyword>
<keyword id="KW-1133">Transmembrane helix</keyword>
<keyword id="KW-0832">Ubl conjugation</keyword>
<protein>
    <recommendedName>
        <fullName>Prosaposin receptor GPR37</fullName>
    </recommendedName>
    <alternativeName>
        <fullName>G-protein coupled receptor 37</fullName>
    </alternativeName>
    <alternativeName>
        <fullName>G-protein coupled receptor CNS1</fullName>
    </alternativeName>
</protein>
<organism>
    <name type="scientific">Rattus norvegicus</name>
    <name type="common">Rat</name>
    <dbReference type="NCBI Taxonomy" id="10116"/>
    <lineage>
        <taxon>Eukaryota</taxon>
        <taxon>Metazoa</taxon>
        <taxon>Chordata</taxon>
        <taxon>Craniata</taxon>
        <taxon>Vertebrata</taxon>
        <taxon>Euteleostomi</taxon>
        <taxon>Mammalia</taxon>
        <taxon>Eutheria</taxon>
        <taxon>Euarchontoglires</taxon>
        <taxon>Glires</taxon>
        <taxon>Rodentia</taxon>
        <taxon>Myomorpha</taxon>
        <taxon>Muroidea</taxon>
        <taxon>Muridae</taxon>
        <taxon>Murinae</taxon>
        <taxon>Rattus</taxon>
    </lineage>
</organism>
<gene>
    <name type="primary">Gpr37</name>
</gene>
<sequence length="603" mass="66961">MPAPGAPLSRTSRLLLLLLFKVSVSAALSFVPEPRNGTCLGESCSPLIPRRSRDAGGPRNSARDALRVHVPREKLEAEVRGATSWDLPPPRGGDTGVIEEAAASGPLGPPTKPPGAWRWKGAQGKEPSGHLGRREPTDSQLFRQTSERGEMSSKRDEIPQGSQEHSVKTEPEPRDLFYWPRKTGQLQGSHYRPSAVHEGRTLAPPGRALPQNGSADDWVPDQGGPRRGNSTNRRVRLKNPFYPLTQESYGAYAVMCLSVVIFGTGIIGNLAVMCIVCHNYYMRSISNSLLANLAFWDFLIIFFCLPLVIFHELTKKWLLEDFSCKIVPYIEVASLGVTTFTLCALCIDRFRAATNVQMYYEMIENCSSTTAKLAVIWVGALLLALPEVVLRQLSKEDLGFSGQAPAERCVIKISPDLPDTIYVLALTYDGARLWWYFGCYFCLPTLFTITCSLVTARKIRKAEKASTRGNKRQIHLESQMNCTVVALTILYGFCIIPENICNIVTAYMATGVSQQTMDLLNIISQFLLFFKSCVTPVLLFCLCRPFSRAFMECCCCCCEECIQKSSTVTSDDNDNEYTTELELSPFSTIRREMSTFASVGTHC</sequence>
<accession>Q9QYC6</accession>
<reference key="1">
    <citation type="journal article" date="1999" name="Brain Res. Mol. Brain Res.">
        <title>Molecular cloning and characterization of two putative G protein-coupled receptors which are highly expressed in the central nervous system.</title>
        <authorList>
            <person name="Leng N."/>
            <person name="Gu G."/>
            <person name="Simerly R.B."/>
            <person name="Spindel E.R."/>
        </authorList>
    </citation>
    <scope>NUCLEOTIDE SEQUENCE [MRNA]</scope>
    <scope>TISSUE SPECIFICITY</scope>
    <source>
        <tissue>Hypothalamus</tissue>
    </source>
</reference>
<reference key="2">
    <citation type="journal article" date="2004" name="Genome Res.">
        <title>The status, quality, and expansion of the NIH full-length cDNA project: the Mammalian Gene Collection (MGC).</title>
        <authorList>
            <consortium name="The MGC Project Team"/>
        </authorList>
    </citation>
    <scope>NUCLEOTIDE SEQUENCE [LARGE SCALE MRNA]</scope>
    <source>
        <tissue>Brain</tissue>
    </source>
</reference>
<comment type="function">
    <text evidence="2 3">G-protein-coupled receptor that plays a role in several physiological pathways such as resolution of inflammatory pain and oligodendrocyte differentiation (By similarity). Acts as a receptor for several ligands including prosaposin, osteocalcin or neuroprotectin D1. Ligand binding induces endocytosis, followed by an ERK phosphorylation cascade (By similarity). Acts as a receptor for osteocalcin (OCN) to regulate oligodendrocyte differentiation and central nervous system myelination. Mechanistically, plays a negative role in oligodendrocyte differentiation and myelination during development via activation of the ERK1/2 signaling pathway. Therefore, regulates the stability of myelin or resistance of myelin itself to demyelination. Upon activation by neuroprotectin D1 (NPD1), promotes the activation of phagocytosis in macrophages as well as the shift in cytokine release toward an anti-inflammatory profile, and thus helps to reverse inflammatory pain. In addition, the increased macrophage phagocytosis mediates protection against sepsis upon pathogen infection. Additionally, extracellular vesicles derived from efferocyte express prosaposin, which binds to macrophage GPR37 to increase expression of the efferocytosis receptor TIM4 via an ERK-AP1-dependent signaling axis, leading to increased macrophage efferocytosis efficiency and accelerated resolution of inflammation (By similarity). May also act as a maturation factor of LRP6, protecting LRP6 from the endoplasmic reticulum (ER)-associated protein degradation (ERAD) and thereby promoting the Wnt/beta-catenin signaling pathway (By similarity).</text>
</comment>
<comment type="subunit">
    <text evidence="1">Forms a complex with PRKN, STUB1 and HSP70. The amount of STUB1 in the complex increases during ER stress. STUB1 promotes the dissociation of HSP70 from PRKN, thus facilitating PRKN-mediated GPR37 ubiquitination. Interacts with PACRG (By similarity).</text>
</comment>
<comment type="subcellular location">
    <subcellularLocation>
        <location evidence="2">Cell projection</location>
        <location evidence="2">Dendrite</location>
    </subcellularLocation>
    <subcellularLocation>
        <location evidence="2">Synapse</location>
    </subcellularLocation>
    <subcellularLocation>
        <location evidence="2">Cell membrane</location>
        <topology evidence="2">Multi-pass membrane protein</topology>
    </subcellularLocation>
    <subcellularLocation>
        <location evidence="2">Endoplasmic reticulum membrane</location>
        <topology evidence="2">Multi-pass membrane protein</topology>
    </subcellularLocation>
</comment>
<comment type="tissue specificity">
    <text evidence="7">Highly expressed in the brain. High levels of expression were seen in fiber tracts such as the corpus callosum, anterior commissure, fornix, internal capsule, cerebral peduncles, and stria terminalis. Additionally, moderate levels of expression were seen in the pyramidal tracts and cerebellar peduncles, as well as in the spinal tract of the trigeminal nerve and the spinal fasciculi.</text>
</comment>
<comment type="PTM">
    <text evidence="2">The N-terminus is cleaved by ADAM10 metalloproteinase; mediating limited proteolysis leading to the release of receptor ectodomain by shedding. In addition, cleaved by FURIN between Arg-53 and Asp-54.</text>
</comment>
<comment type="PTM">
    <text evidence="2">Ubiquitinated by PRKN in the presence of UBE2E1 and UBE2L3 in the endoplasmic reticulum. The unfolded form is specifically ubiquitinated by SYVN1, which promotes its proteasomal degradation and prevents neuronal cell death.</text>
</comment>
<comment type="similarity">
    <text evidence="5">Belongs to the G-protein coupled receptor 1 family.</text>
</comment>
<dbReference type="EMBL" id="AF087946">
    <property type="protein sequence ID" value="AAD54655.1"/>
    <property type="molecule type" value="mRNA"/>
</dbReference>
<dbReference type="EMBL" id="BC087728">
    <property type="protein sequence ID" value="AAH87728.1"/>
    <property type="molecule type" value="mRNA"/>
</dbReference>
<dbReference type="RefSeq" id="NP_476549.1">
    <property type="nucleotide sequence ID" value="NM_057201.2"/>
</dbReference>
<dbReference type="SMR" id="Q9QYC6"/>
<dbReference type="FunCoup" id="Q9QYC6">
    <property type="interactions" value="1073"/>
</dbReference>
<dbReference type="STRING" id="10116.ENSRNOP00000003593"/>
<dbReference type="GlyCosmos" id="Q9QYC6">
    <property type="glycosylation" value="3 sites, No reported glycans"/>
</dbReference>
<dbReference type="GlyGen" id="Q9QYC6">
    <property type="glycosylation" value="3 sites"/>
</dbReference>
<dbReference type="PhosphoSitePlus" id="Q9QYC6"/>
<dbReference type="PaxDb" id="10116-ENSRNOP00000003593"/>
<dbReference type="Ensembl" id="ENSRNOT00000003593.7">
    <property type="protein sequence ID" value="ENSRNOP00000003593.4"/>
    <property type="gene ID" value="ENSRNOG00000002524.7"/>
</dbReference>
<dbReference type="GeneID" id="117549"/>
<dbReference type="KEGG" id="rno:117549"/>
<dbReference type="UCSC" id="RGD:619848">
    <property type="organism name" value="rat"/>
</dbReference>
<dbReference type="AGR" id="RGD:619848"/>
<dbReference type="CTD" id="2861"/>
<dbReference type="RGD" id="619848">
    <property type="gene designation" value="Gpr37"/>
</dbReference>
<dbReference type="eggNOG" id="KOG3656">
    <property type="taxonomic scope" value="Eukaryota"/>
</dbReference>
<dbReference type="GeneTree" id="ENSGT01120000271846"/>
<dbReference type="HOGENOM" id="CLU_032138_1_0_1"/>
<dbReference type="InParanoid" id="Q9QYC6"/>
<dbReference type="OMA" id="YYWPRRG"/>
<dbReference type="OrthoDB" id="9939725at2759"/>
<dbReference type="PhylomeDB" id="Q9QYC6"/>
<dbReference type="TreeFam" id="TF331292"/>
<dbReference type="Reactome" id="R-RNO-375276">
    <property type="pathway name" value="Peptide ligand-binding receptors"/>
</dbReference>
<dbReference type="Reactome" id="R-RNO-418594">
    <property type="pathway name" value="G alpha (i) signalling events"/>
</dbReference>
<dbReference type="PRO" id="PR:Q9QYC6"/>
<dbReference type="Proteomes" id="UP000002494">
    <property type="component" value="Chromosome 4"/>
</dbReference>
<dbReference type="Bgee" id="ENSRNOG00000002524">
    <property type="expression patterns" value="Expressed in Ammon's horn and 19 other cell types or tissues"/>
</dbReference>
<dbReference type="GO" id="GO:0009986">
    <property type="term" value="C:cell surface"/>
    <property type="evidence" value="ECO:0000266"/>
    <property type="project" value="RGD"/>
</dbReference>
<dbReference type="GO" id="GO:0005737">
    <property type="term" value="C:cytoplasm"/>
    <property type="evidence" value="ECO:0000266"/>
    <property type="project" value="RGD"/>
</dbReference>
<dbReference type="GO" id="GO:0030425">
    <property type="term" value="C:dendrite"/>
    <property type="evidence" value="ECO:0007669"/>
    <property type="project" value="UniProtKB-SubCell"/>
</dbReference>
<dbReference type="GO" id="GO:0005783">
    <property type="term" value="C:endoplasmic reticulum"/>
    <property type="evidence" value="ECO:0000266"/>
    <property type="project" value="RGD"/>
</dbReference>
<dbReference type="GO" id="GO:0005789">
    <property type="term" value="C:endoplasmic reticulum membrane"/>
    <property type="evidence" value="ECO:0007669"/>
    <property type="project" value="UniProtKB-SubCell"/>
</dbReference>
<dbReference type="GO" id="GO:0005886">
    <property type="term" value="C:plasma membrane"/>
    <property type="evidence" value="ECO:0000266"/>
    <property type="project" value="RGD"/>
</dbReference>
<dbReference type="GO" id="GO:0043235">
    <property type="term" value="C:receptor complex"/>
    <property type="evidence" value="ECO:0000266"/>
    <property type="project" value="RGD"/>
</dbReference>
<dbReference type="GO" id="GO:0045202">
    <property type="term" value="C:synapse"/>
    <property type="evidence" value="ECO:0000266"/>
    <property type="project" value="RGD"/>
</dbReference>
<dbReference type="GO" id="GO:0000151">
    <property type="term" value="C:ubiquitin ligase complex"/>
    <property type="evidence" value="ECO:0000266"/>
    <property type="project" value="RGD"/>
</dbReference>
<dbReference type="GO" id="GO:0008528">
    <property type="term" value="F:G protein-coupled peptide receptor activity"/>
    <property type="evidence" value="ECO:0000266"/>
    <property type="project" value="RGD"/>
</dbReference>
<dbReference type="GO" id="GO:0031072">
    <property type="term" value="F:heat shock protein binding"/>
    <property type="evidence" value="ECO:0000266"/>
    <property type="project" value="RGD"/>
</dbReference>
<dbReference type="GO" id="GO:0030544">
    <property type="term" value="F:Hsp70 protein binding"/>
    <property type="evidence" value="ECO:0000266"/>
    <property type="project" value="RGD"/>
</dbReference>
<dbReference type="GO" id="GO:0042923">
    <property type="term" value="F:neuropeptide binding"/>
    <property type="evidence" value="ECO:0000266"/>
    <property type="project" value="RGD"/>
</dbReference>
<dbReference type="GO" id="GO:0008188">
    <property type="term" value="F:neuropeptide receptor activity"/>
    <property type="evidence" value="ECO:0000266"/>
    <property type="project" value="RGD"/>
</dbReference>
<dbReference type="GO" id="GO:0030165">
    <property type="term" value="F:PDZ domain binding"/>
    <property type="evidence" value="ECO:0000266"/>
    <property type="project" value="RGD"/>
</dbReference>
<dbReference type="GO" id="GO:0042277">
    <property type="term" value="F:peptide binding"/>
    <property type="evidence" value="ECO:0000266"/>
    <property type="project" value="RGD"/>
</dbReference>
<dbReference type="GO" id="GO:0036505">
    <property type="term" value="F:prosaposin receptor activity"/>
    <property type="evidence" value="ECO:0000266"/>
    <property type="project" value="RGD"/>
</dbReference>
<dbReference type="GO" id="GO:0031625">
    <property type="term" value="F:ubiquitin protein ligase binding"/>
    <property type="evidence" value="ECO:0000266"/>
    <property type="project" value="RGD"/>
</dbReference>
<dbReference type="GO" id="GO:0007193">
    <property type="term" value="P:adenylate cyclase-inhibiting G protein-coupled receptor signaling pathway"/>
    <property type="evidence" value="ECO:0000266"/>
    <property type="project" value="RGD"/>
</dbReference>
<dbReference type="GO" id="GO:0034614">
    <property type="term" value="P:cellular response to reactive oxygen species"/>
    <property type="evidence" value="ECO:0000266"/>
    <property type="project" value="RGD"/>
</dbReference>
<dbReference type="GO" id="GO:0016358">
    <property type="term" value="P:dendrite development"/>
    <property type="evidence" value="ECO:0000266"/>
    <property type="project" value="RGD"/>
</dbReference>
<dbReference type="GO" id="GO:0042416">
    <property type="term" value="P:dopamine biosynthetic process"/>
    <property type="evidence" value="ECO:0000266"/>
    <property type="project" value="RGD"/>
</dbReference>
<dbReference type="GO" id="GO:0031987">
    <property type="term" value="P:locomotion involved in locomotory behavior"/>
    <property type="evidence" value="ECO:0000266"/>
    <property type="project" value="RGD"/>
</dbReference>
<dbReference type="GO" id="GO:0007218">
    <property type="term" value="P:neuropeptide signaling pathway"/>
    <property type="evidence" value="ECO:0000266"/>
    <property type="project" value="RGD"/>
</dbReference>
<dbReference type="GO" id="GO:0045964">
    <property type="term" value="P:positive regulation of dopamine metabolic process"/>
    <property type="evidence" value="ECO:0000266"/>
    <property type="project" value="RGD"/>
</dbReference>
<dbReference type="GO" id="GO:0043410">
    <property type="term" value="P:positive regulation of MAPK cascade"/>
    <property type="evidence" value="ECO:0000266"/>
    <property type="project" value="RGD"/>
</dbReference>
<dbReference type="CDD" id="cd15127">
    <property type="entry name" value="7tmA_GPR37"/>
    <property type="match status" value="1"/>
</dbReference>
<dbReference type="FunFam" id="1.20.1070.10:FF:000059">
    <property type="entry name" value="G protein-coupled receptor 37"/>
    <property type="match status" value="1"/>
</dbReference>
<dbReference type="Gene3D" id="1.20.1070.10">
    <property type="entry name" value="Rhodopsin 7-helix transmembrane proteins"/>
    <property type="match status" value="1"/>
</dbReference>
<dbReference type="InterPro" id="IPR000276">
    <property type="entry name" value="GPCR_Rhodpsn"/>
</dbReference>
<dbReference type="InterPro" id="IPR017452">
    <property type="entry name" value="GPCR_Rhodpsn_7TM"/>
</dbReference>
<dbReference type="InterPro" id="IPR003909">
    <property type="entry name" value="GPR37_orph"/>
</dbReference>
<dbReference type="PANTHER" id="PTHR46216:SF3">
    <property type="entry name" value="PROSAPOSIN RECEPTOR GPR37"/>
    <property type="match status" value="1"/>
</dbReference>
<dbReference type="PANTHER" id="PTHR46216">
    <property type="entry name" value="PROSAPOSIN RECEPTOR GPR37 FAMILY MEMBER"/>
    <property type="match status" value="1"/>
</dbReference>
<dbReference type="Pfam" id="PF00001">
    <property type="entry name" value="7tm_1"/>
    <property type="match status" value="1"/>
</dbReference>
<dbReference type="PRINTS" id="PR00237">
    <property type="entry name" value="GPCRRHODOPSN"/>
</dbReference>
<dbReference type="PRINTS" id="PR01421">
    <property type="entry name" value="GPR37ORPHANR"/>
</dbReference>
<dbReference type="SUPFAM" id="SSF81321">
    <property type="entry name" value="Family A G protein-coupled receptor-like"/>
    <property type="match status" value="1"/>
</dbReference>
<dbReference type="PROSITE" id="PS50262">
    <property type="entry name" value="G_PROTEIN_RECEP_F1_2"/>
    <property type="match status" value="1"/>
</dbReference>
<proteinExistence type="evidence at transcript level"/>
<feature type="signal peptide" evidence="4">
    <location>
        <begin position="1"/>
        <end position="26"/>
    </location>
</feature>
<feature type="chain" id="PRO_0000012801" description="Prosaposin receptor GPR37">
    <location>
        <begin position="27"/>
        <end position="603"/>
    </location>
</feature>
<feature type="topological domain" description="Extracellular" evidence="4">
    <location>
        <begin position="27"/>
        <end position="255"/>
    </location>
</feature>
<feature type="transmembrane region" description="Helical; Name=1" evidence="4">
    <location>
        <begin position="256"/>
        <end position="276"/>
    </location>
</feature>
<feature type="topological domain" description="Cytoplasmic" evidence="4">
    <location>
        <begin position="277"/>
        <end position="289"/>
    </location>
</feature>
<feature type="transmembrane region" description="Helical; Name=2" evidence="4">
    <location>
        <begin position="290"/>
        <end position="310"/>
    </location>
</feature>
<feature type="topological domain" description="Extracellular" evidence="4">
    <location>
        <begin position="311"/>
        <end position="325"/>
    </location>
</feature>
<feature type="transmembrane region" description="Helical; Name=3" evidence="4">
    <location>
        <begin position="326"/>
        <end position="346"/>
    </location>
</feature>
<feature type="topological domain" description="Cytoplasmic" evidence="4">
    <location>
        <begin position="347"/>
        <end position="369"/>
    </location>
</feature>
<feature type="transmembrane region" description="Helical; Name=4" evidence="4">
    <location>
        <begin position="370"/>
        <end position="390"/>
    </location>
</feature>
<feature type="topological domain" description="Extracellular" evidence="4">
    <location>
        <begin position="391"/>
        <end position="433"/>
    </location>
</feature>
<feature type="transmembrane region" description="Helical; Name=5" evidence="4">
    <location>
        <begin position="434"/>
        <end position="454"/>
    </location>
</feature>
<feature type="topological domain" description="Cytoplasmic" evidence="4">
    <location>
        <begin position="455"/>
        <end position="483"/>
    </location>
</feature>
<feature type="transmembrane region" description="Helical; Name=6" evidence="4">
    <location>
        <begin position="484"/>
        <end position="504"/>
    </location>
</feature>
<feature type="topological domain" description="Extracellular" evidence="4">
    <location>
        <begin position="505"/>
        <end position="521"/>
    </location>
</feature>
<feature type="transmembrane region" description="Helical; Name=7" evidence="4">
    <location>
        <begin position="522"/>
        <end position="542"/>
    </location>
</feature>
<feature type="topological domain" description="Cytoplasmic" evidence="4">
    <location>
        <begin position="543"/>
        <end position="603"/>
    </location>
</feature>
<feature type="region of interest" description="Disordered" evidence="6">
    <location>
        <begin position="39"/>
        <end position="232"/>
    </location>
</feature>
<feature type="compositionally biased region" description="Basic and acidic residues" evidence="6">
    <location>
        <begin position="51"/>
        <end position="79"/>
    </location>
</feature>
<feature type="compositionally biased region" description="Basic and acidic residues" evidence="6">
    <location>
        <begin position="145"/>
        <end position="158"/>
    </location>
</feature>
<feature type="compositionally biased region" description="Basic and acidic residues" evidence="6">
    <location>
        <begin position="165"/>
        <end position="175"/>
    </location>
</feature>
<feature type="site" description="Cleavage; by FURIN" evidence="2">
    <location>
        <begin position="53"/>
        <end position="54"/>
    </location>
</feature>
<feature type="site" description="Cleavage" evidence="2">
    <location>
        <begin position="164"/>
        <end position="165"/>
    </location>
</feature>
<feature type="glycosylation site" description="N-linked (GlcNAc...) asparagine" evidence="4">
    <location>
        <position position="36"/>
    </location>
</feature>
<feature type="glycosylation site" description="N-linked (GlcNAc...) asparagine" evidence="4">
    <location>
        <position position="212"/>
    </location>
</feature>
<feature type="glycosylation site" description="N-linked (GlcNAc...) asparagine" evidence="4">
    <location>
        <position position="229"/>
    </location>
</feature>
<feature type="disulfide bond" evidence="5">
    <location>
        <begin position="324"/>
        <end position="409"/>
    </location>
</feature>
<evidence type="ECO:0000250" key="1"/>
<evidence type="ECO:0000250" key="2">
    <source>
        <dbReference type="UniProtKB" id="O15354"/>
    </source>
</evidence>
<evidence type="ECO:0000250" key="3">
    <source>
        <dbReference type="UniProtKB" id="Q9QY42"/>
    </source>
</evidence>
<evidence type="ECO:0000255" key="4"/>
<evidence type="ECO:0000255" key="5">
    <source>
        <dbReference type="PROSITE-ProRule" id="PRU00521"/>
    </source>
</evidence>
<evidence type="ECO:0000256" key="6">
    <source>
        <dbReference type="SAM" id="MobiDB-lite"/>
    </source>
</evidence>
<evidence type="ECO:0000269" key="7">
    <source>
    </source>
</evidence>